<sequence length="88" mass="10330">MDGFDKTMKFSIQDEKQSVHVNDVLLTVYDALQEKGYNPINQIVGYLLSGDPAYIPRHKDARSIIRKLERDELIEELVKSYLKHHREE</sequence>
<comment type="similarity">
    <text evidence="1">Belongs to the UPF0297 family.</text>
</comment>
<reference key="1">
    <citation type="submission" date="2009-02" db="EMBL/GenBank/DDBJ databases">
        <title>Genome sequence of Bacillus cereus 03BB102.</title>
        <authorList>
            <person name="Dodson R.J."/>
            <person name="Jackson P."/>
            <person name="Munk A.C."/>
            <person name="Brettin T."/>
            <person name="Bruce D."/>
            <person name="Detter C."/>
            <person name="Tapia R."/>
            <person name="Han C."/>
            <person name="Sutton G."/>
            <person name="Sims D."/>
        </authorList>
    </citation>
    <scope>NUCLEOTIDE SEQUENCE [LARGE SCALE GENOMIC DNA]</scope>
    <source>
        <strain>03BB102</strain>
    </source>
</reference>
<gene>
    <name type="ordered locus">BCA_4499</name>
</gene>
<protein>
    <recommendedName>
        <fullName evidence="1">UPF0297 protein BCA_4499</fullName>
    </recommendedName>
</protein>
<accession>C1EST2</accession>
<dbReference type="EMBL" id="CP001407">
    <property type="protein sequence ID" value="ACO28731.1"/>
    <property type="molecule type" value="Genomic_DNA"/>
</dbReference>
<dbReference type="RefSeq" id="WP_000348590.1">
    <property type="nucleotide sequence ID" value="NZ_CP009318.1"/>
</dbReference>
<dbReference type="SMR" id="C1EST2"/>
<dbReference type="KEGG" id="bcx:BCA_4499"/>
<dbReference type="PATRIC" id="fig|572264.18.peg.4447"/>
<dbReference type="Proteomes" id="UP000002210">
    <property type="component" value="Chromosome"/>
</dbReference>
<dbReference type="HAMAP" id="MF_01507">
    <property type="entry name" value="UPF0297"/>
    <property type="match status" value="1"/>
</dbReference>
<dbReference type="InterPro" id="IPR009309">
    <property type="entry name" value="IreB"/>
</dbReference>
<dbReference type="NCBIfam" id="NF003997">
    <property type="entry name" value="PRK05473.1"/>
    <property type="match status" value="1"/>
</dbReference>
<dbReference type="PANTHER" id="PTHR40067">
    <property type="entry name" value="UPF0297 PROTEIN YRZL"/>
    <property type="match status" value="1"/>
</dbReference>
<dbReference type="PANTHER" id="PTHR40067:SF1">
    <property type="entry name" value="UPF0297 PROTEIN YRZL"/>
    <property type="match status" value="1"/>
</dbReference>
<dbReference type="Pfam" id="PF06135">
    <property type="entry name" value="IreB"/>
    <property type="match status" value="1"/>
</dbReference>
<dbReference type="PIRSF" id="PIRSF037258">
    <property type="entry name" value="DUF965_bac"/>
    <property type="match status" value="1"/>
</dbReference>
<evidence type="ECO:0000255" key="1">
    <source>
        <dbReference type="HAMAP-Rule" id="MF_01507"/>
    </source>
</evidence>
<name>Y4499_BACC3</name>
<proteinExistence type="inferred from homology"/>
<feature type="chain" id="PRO_1000185037" description="UPF0297 protein BCA_4499">
    <location>
        <begin position="1"/>
        <end position="88"/>
    </location>
</feature>
<organism>
    <name type="scientific">Bacillus cereus (strain 03BB102)</name>
    <dbReference type="NCBI Taxonomy" id="572264"/>
    <lineage>
        <taxon>Bacteria</taxon>
        <taxon>Bacillati</taxon>
        <taxon>Bacillota</taxon>
        <taxon>Bacilli</taxon>
        <taxon>Bacillales</taxon>
        <taxon>Bacillaceae</taxon>
        <taxon>Bacillus</taxon>
        <taxon>Bacillus cereus group</taxon>
    </lineage>
</organism>